<reference key="1">
    <citation type="journal article" date="2005" name="Science">
        <title>The transcriptional landscape of the mammalian genome.</title>
        <authorList>
            <person name="Carninci P."/>
            <person name="Kasukawa T."/>
            <person name="Katayama S."/>
            <person name="Gough J."/>
            <person name="Frith M.C."/>
            <person name="Maeda N."/>
            <person name="Oyama R."/>
            <person name="Ravasi T."/>
            <person name="Lenhard B."/>
            <person name="Wells C."/>
            <person name="Kodzius R."/>
            <person name="Shimokawa K."/>
            <person name="Bajic V.B."/>
            <person name="Brenner S.E."/>
            <person name="Batalov S."/>
            <person name="Forrest A.R."/>
            <person name="Zavolan M."/>
            <person name="Davis M.J."/>
            <person name="Wilming L.G."/>
            <person name="Aidinis V."/>
            <person name="Allen J.E."/>
            <person name="Ambesi-Impiombato A."/>
            <person name="Apweiler R."/>
            <person name="Aturaliya R.N."/>
            <person name="Bailey T.L."/>
            <person name="Bansal M."/>
            <person name="Baxter L."/>
            <person name="Beisel K.W."/>
            <person name="Bersano T."/>
            <person name="Bono H."/>
            <person name="Chalk A.M."/>
            <person name="Chiu K.P."/>
            <person name="Choudhary V."/>
            <person name="Christoffels A."/>
            <person name="Clutterbuck D.R."/>
            <person name="Crowe M.L."/>
            <person name="Dalla E."/>
            <person name="Dalrymple B.P."/>
            <person name="de Bono B."/>
            <person name="Della Gatta G."/>
            <person name="di Bernardo D."/>
            <person name="Down T."/>
            <person name="Engstrom P."/>
            <person name="Fagiolini M."/>
            <person name="Faulkner G."/>
            <person name="Fletcher C.F."/>
            <person name="Fukushima T."/>
            <person name="Furuno M."/>
            <person name="Futaki S."/>
            <person name="Gariboldi M."/>
            <person name="Georgii-Hemming P."/>
            <person name="Gingeras T.R."/>
            <person name="Gojobori T."/>
            <person name="Green R.E."/>
            <person name="Gustincich S."/>
            <person name="Harbers M."/>
            <person name="Hayashi Y."/>
            <person name="Hensch T.K."/>
            <person name="Hirokawa N."/>
            <person name="Hill D."/>
            <person name="Huminiecki L."/>
            <person name="Iacono M."/>
            <person name="Ikeo K."/>
            <person name="Iwama A."/>
            <person name="Ishikawa T."/>
            <person name="Jakt M."/>
            <person name="Kanapin A."/>
            <person name="Katoh M."/>
            <person name="Kawasawa Y."/>
            <person name="Kelso J."/>
            <person name="Kitamura H."/>
            <person name="Kitano H."/>
            <person name="Kollias G."/>
            <person name="Krishnan S.P."/>
            <person name="Kruger A."/>
            <person name="Kummerfeld S.K."/>
            <person name="Kurochkin I.V."/>
            <person name="Lareau L.F."/>
            <person name="Lazarevic D."/>
            <person name="Lipovich L."/>
            <person name="Liu J."/>
            <person name="Liuni S."/>
            <person name="McWilliam S."/>
            <person name="Madan Babu M."/>
            <person name="Madera M."/>
            <person name="Marchionni L."/>
            <person name="Matsuda H."/>
            <person name="Matsuzawa S."/>
            <person name="Miki H."/>
            <person name="Mignone F."/>
            <person name="Miyake S."/>
            <person name="Morris K."/>
            <person name="Mottagui-Tabar S."/>
            <person name="Mulder N."/>
            <person name="Nakano N."/>
            <person name="Nakauchi H."/>
            <person name="Ng P."/>
            <person name="Nilsson R."/>
            <person name="Nishiguchi S."/>
            <person name="Nishikawa S."/>
            <person name="Nori F."/>
            <person name="Ohara O."/>
            <person name="Okazaki Y."/>
            <person name="Orlando V."/>
            <person name="Pang K.C."/>
            <person name="Pavan W.J."/>
            <person name="Pavesi G."/>
            <person name="Pesole G."/>
            <person name="Petrovsky N."/>
            <person name="Piazza S."/>
            <person name="Reed J."/>
            <person name="Reid J.F."/>
            <person name="Ring B.Z."/>
            <person name="Ringwald M."/>
            <person name="Rost B."/>
            <person name="Ruan Y."/>
            <person name="Salzberg S.L."/>
            <person name="Sandelin A."/>
            <person name="Schneider C."/>
            <person name="Schoenbach C."/>
            <person name="Sekiguchi K."/>
            <person name="Semple C.A."/>
            <person name="Seno S."/>
            <person name="Sessa L."/>
            <person name="Sheng Y."/>
            <person name="Shibata Y."/>
            <person name="Shimada H."/>
            <person name="Shimada K."/>
            <person name="Silva D."/>
            <person name="Sinclair B."/>
            <person name="Sperling S."/>
            <person name="Stupka E."/>
            <person name="Sugiura K."/>
            <person name="Sultana R."/>
            <person name="Takenaka Y."/>
            <person name="Taki K."/>
            <person name="Tammoja K."/>
            <person name="Tan S.L."/>
            <person name="Tang S."/>
            <person name="Taylor M.S."/>
            <person name="Tegner J."/>
            <person name="Teichmann S.A."/>
            <person name="Ueda H.R."/>
            <person name="van Nimwegen E."/>
            <person name="Verardo R."/>
            <person name="Wei C.L."/>
            <person name="Yagi K."/>
            <person name="Yamanishi H."/>
            <person name="Zabarovsky E."/>
            <person name="Zhu S."/>
            <person name="Zimmer A."/>
            <person name="Hide W."/>
            <person name="Bult C."/>
            <person name="Grimmond S.M."/>
            <person name="Teasdale R.D."/>
            <person name="Liu E.T."/>
            <person name="Brusic V."/>
            <person name="Quackenbush J."/>
            <person name="Wahlestedt C."/>
            <person name="Mattick J.S."/>
            <person name="Hume D.A."/>
            <person name="Kai C."/>
            <person name="Sasaki D."/>
            <person name="Tomaru Y."/>
            <person name="Fukuda S."/>
            <person name="Kanamori-Katayama M."/>
            <person name="Suzuki M."/>
            <person name="Aoki J."/>
            <person name="Arakawa T."/>
            <person name="Iida J."/>
            <person name="Imamura K."/>
            <person name="Itoh M."/>
            <person name="Kato T."/>
            <person name="Kawaji H."/>
            <person name="Kawagashira N."/>
            <person name="Kawashima T."/>
            <person name="Kojima M."/>
            <person name="Kondo S."/>
            <person name="Konno H."/>
            <person name="Nakano K."/>
            <person name="Ninomiya N."/>
            <person name="Nishio T."/>
            <person name="Okada M."/>
            <person name="Plessy C."/>
            <person name="Shibata K."/>
            <person name="Shiraki T."/>
            <person name="Suzuki S."/>
            <person name="Tagami M."/>
            <person name="Waki K."/>
            <person name="Watahiki A."/>
            <person name="Okamura-Oho Y."/>
            <person name="Suzuki H."/>
            <person name="Kawai J."/>
            <person name="Hayashizaki Y."/>
        </authorList>
    </citation>
    <scope>NUCLEOTIDE SEQUENCE [LARGE SCALE MRNA]</scope>
    <source>
        <strain>C57BL/6J</strain>
        <tissue>Placenta</tissue>
    </source>
</reference>
<reference key="2">
    <citation type="journal article" date="2009" name="PLoS Biol.">
        <title>Lineage-specific biology revealed by a finished genome assembly of the mouse.</title>
        <authorList>
            <person name="Church D.M."/>
            <person name="Goodstadt L."/>
            <person name="Hillier L.W."/>
            <person name="Zody M.C."/>
            <person name="Goldstein S."/>
            <person name="She X."/>
            <person name="Bult C.J."/>
            <person name="Agarwala R."/>
            <person name="Cherry J.L."/>
            <person name="DiCuccio M."/>
            <person name="Hlavina W."/>
            <person name="Kapustin Y."/>
            <person name="Meric P."/>
            <person name="Maglott D."/>
            <person name="Birtle Z."/>
            <person name="Marques A.C."/>
            <person name="Graves T."/>
            <person name="Zhou S."/>
            <person name="Teague B."/>
            <person name="Potamousis K."/>
            <person name="Churas C."/>
            <person name="Place M."/>
            <person name="Herschleb J."/>
            <person name="Runnheim R."/>
            <person name="Forrest D."/>
            <person name="Amos-Landgraf J."/>
            <person name="Schwartz D.C."/>
            <person name="Cheng Z."/>
            <person name="Lindblad-Toh K."/>
            <person name="Eichler E.E."/>
            <person name="Ponting C.P."/>
        </authorList>
    </citation>
    <scope>NUCLEOTIDE SEQUENCE [LARGE SCALE GENOMIC DNA]</scope>
    <source>
        <strain>C57BL/6J</strain>
    </source>
</reference>
<reference key="3">
    <citation type="submission" date="2005-09" db="EMBL/GenBank/DDBJ databases">
        <authorList>
            <person name="Mural R.J."/>
            <person name="Adams M.D."/>
            <person name="Myers E.W."/>
            <person name="Smith H.O."/>
            <person name="Venter J.C."/>
        </authorList>
    </citation>
    <scope>NUCLEOTIDE SEQUENCE [LARGE SCALE GENOMIC DNA]</scope>
</reference>
<reference key="4">
    <citation type="journal article" date="2004" name="Genome Res.">
        <title>The status, quality, and expansion of the NIH full-length cDNA project: the Mammalian Gene Collection (MGC).</title>
        <authorList>
            <consortium name="The MGC Project Team"/>
        </authorList>
    </citation>
    <scope>NUCLEOTIDE SEQUENCE [LARGE SCALE MRNA]</scope>
    <source>
        <tissue>Brain</tissue>
    </source>
</reference>
<reference key="5">
    <citation type="journal article" date="2007" name="J. Neurosci.">
        <title>Plexin-B2, but not Plexin-B1, critically modulates neuronal migration and patterning of the developing nervous system in vivo.</title>
        <authorList>
            <person name="Deng S."/>
            <person name="Hirschberg A."/>
            <person name="Worzfeld T."/>
            <person name="Penachioni J.Y."/>
            <person name="Korostylev A."/>
            <person name="Swiercz J.M."/>
            <person name="Vodrazka P."/>
            <person name="Mauti O."/>
            <person name="Stoeckli E.T."/>
            <person name="Tamagnone L."/>
            <person name="Offermanns S."/>
            <person name="Kuner R."/>
        </authorList>
    </citation>
    <scope>DISRUPTION PHENOTYPE</scope>
    <scope>FUNCTION</scope>
    <scope>TISSUE SPECIFICITY</scope>
</reference>
<reference key="6">
    <citation type="journal article" date="2009" name="Immunity">
        <title>The phagosomal proteome in interferon-gamma-activated macrophages.</title>
        <authorList>
            <person name="Trost M."/>
            <person name="English L."/>
            <person name="Lemieux S."/>
            <person name="Courcelles M."/>
            <person name="Desjardins M."/>
            <person name="Thibault P."/>
        </authorList>
    </citation>
    <scope>PHOSPHORYLATION [LARGE SCALE ANALYSIS] AT SER-1240 AND SER-1248</scope>
    <scope>IDENTIFICATION BY MASS SPECTROMETRY [LARGE SCALE ANALYSIS]</scope>
</reference>
<reference key="7">
    <citation type="journal article" date="2009" name="Nat. Biotechnol.">
        <title>Mass-spectrometric identification and relative quantification of N-linked cell surface glycoproteins.</title>
        <authorList>
            <person name="Wollscheid B."/>
            <person name="Bausch-Fluck D."/>
            <person name="Henderson C."/>
            <person name="O'Brien R."/>
            <person name="Bibel M."/>
            <person name="Schiess R."/>
            <person name="Aebersold R."/>
            <person name="Watts J.D."/>
        </authorList>
    </citation>
    <scope>GLYCOSYLATION [LARGE SCALE ANALYSIS] AT ASN-393</scope>
    <source>
        <tissue>Leukemic T-cell</tissue>
    </source>
</reference>
<reference key="8">
    <citation type="journal article" date="2010" name="Cell">
        <title>A tissue-specific atlas of mouse protein phosphorylation and expression.</title>
        <authorList>
            <person name="Huttlin E.L."/>
            <person name="Jedrychowski M.P."/>
            <person name="Elias J.E."/>
            <person name="Goswami T."/>
            <person name="Rad R."/>
            <person name="Beausoleil S.A."/>
            <person name="Villen J."/>
            <person name="Haas W."/>
            <person name="Sowa M.E."/>
            <person name="Gygi S.P."/>
        </authorList>
    </citation>
    <scope>PHOSPHORYLATION [LARGE SCALE ANALYSIS] AT SER-1574</scope>
    <scope>IDENTIFICATION BY MASS SPECTROMETRY [LARGE SCALE ANALYSIS]</scope>
    <source>
        <tissue>Brain</tissue>
        <tissue>Brown adipose tissue</tissue>
        <tissue>Heart</tissue>
        <tissue>Kidney</tissue>
        <tissue>Liver</tissue>
        <tissue>Lung</tissue>
        <tissue>Pancreas</tissue>
        <tissue>Spleen</tissue>
        <tissue>Testis</tissue>
    </source>
</reference>
<reference key="9">
    <citation type="journal article" date="2010" name="Mol. Cell. Biol.">
        <title>Gene deletion mutants reveal a role for semaphorin receptors of the plexin-B family in mechanisms underlying corticogenesis.</title>
        <authorList>
            <person name="Hirschberg A."/>
            <person name="Deng S."/>
            <person name="Korostylev A."/>
            <person name="Paldy E."/>
            <person name="Costa M.R."/>
            <person name="Worzfeld T."/>
            <person name="Vodrazka P."/>
            <person name="Wizenmann A."/>
            <person name="Gotz M."/>
            <person name="Offermanns S."/>
            <person name="Kuner R."/>
        </authorList>
    </citation>
    <scope>DISRUPTION PHENOTYPE</scope>
    <scope>FUNCTION</scope>
</reference>
<reference key="10">
    <citation type="journal article" date="2011" name="Mol. Cell. Neurosci.">
        <title>Semaphorin 4C and 4G are ligands of Plexin-B2 required in cerebellar development.</title>
        <authorList>
            <person name="Maier V."/>
            <person name="Jolicoeur C."/>
            <person name="Rayburn H."/>
            <person name="Takegahara N."/>
            <person name="Kumanogoh A."/>
            <person name="Kikutani H."/>
            <person name="Tessier-Lavigne M."/>
            <person name="Wurst W."/>
            <person name="Friedel R.H."/>
        </authorList>
    </citation>
    <scope>FUNCTION</scope>
</reference>
<reference key="11">
    <citation type="journal article" date="2011" name="PLoS ONE">
        <title>Plexin-B2 negatively regulates macrophage motility, Rac, and Cdc42 activation.</title>
        <authorList>
            <person name="Roney K.E."/>
            <person name="O'Connor B.P."/>
            <person name="Wen H."/>
            <person name="Holl E.K."/>
            <person name="Guthrie E.H."/>
            <person name="Davis B.K."/>
            <person name="Jones S.W."/>
            <person name="Jha S."/>
            <person name="Sharek L."/>
            <person name="Garcia-Mata R."/>
            <person name="Bear J.E."/>
            <person name="Ting J.P."/>
        </authorList>
    </citation>
    <scope>FUNCTION</scope>
    <scope>SUBCELLULAR LOCATION</scope>
    <scope>TISSUE SPECIFICITY</scope>
</reference>
<reference key="12">
    <citation type="journal article" date="2017" name="Cell">
        <title>Plexin-B2 mediates physiologic and pathologic functions of angiogenin.</title>
        <authorList>
            <person name="Yu W."/>
            <person name="Goncalves K.A."/>
            <person name="Li S."/>
            <person name="Kishikawa H."/>
            <person name="Sun G."/>
            <person name="Yang H."/>
            <person name="Vanli N."/>
            <person name="Wu Y."/>
            <person name="Jiang Y."/>
            <person name="Hu M.G."/>
            <person name="Friedel R.H."/>
            <person name="Hu G.F."/>
        </authorList>
    </citation>
    <scope>FUNCTION</scope>
</reference>
<reference key="13">
    <citation type="journal article" date="2018" name="Mol. Cell. Neurosci.">
        <title>Class 4 Semaphorins and Plexin-B receptors regulate GABAergic and glutamatergic synapse development in the mammalian hippocampus.</title>
        <authorList>
            <person name="McDermott J.E."/>
            <person name="Goldblatt D."/>
            <person name="Paradis S."/>
        </authorList>
    </citation>
    <scope>FUNCTION</scope>
    <scope>TISSUE SPECIFICITY</scope>
</reference>
<organism>
    <name type="scientific">Mus musculus</name>
    <name type="common">Mouse</name>
    <dbReference type="NCBI Taxonomy" id="10090"/>
    <lineage>
        <taxon>Eukaryota</taxon>
        <taxon>Metazoa</taxon>
        <taxon>Chordata</taxon>
        <taxon>Craniata</taxon>
        <taxon>Vertebrata</taxon>
        <taxon>Euteleostomi</taxon>
        <taxon>Mammalia</taxon>
        <taxon>Eutheria</taxon>
        <taxon>Euarchontoglires</taxon>
        <taxon>Glires</taxon>
        <taxon>Rodentia</taxon>
        <taxon>Myomorpha</taxon>
        <taxon>Muroidea</taxon>
        <taxon>Muridae</taxon>
        <taxon>Murinae</taxon>
        <taxon>Mus</taxon>
        <taxon>Mus</taxon>
    </lineage>
</organism>
<keyword id="KW-0002">3D-structure</keyword>
<keyword id="KW-1003">Cell membrane</keyword>
<keyword id="KW-0217">Developmental protein</keyword>
<keyword id="KW-1015">Disulfide bond</keyword>
<keyword id="KW-0325">Glycoprotein</keyword>
<keyword id="KW-0472">Membrane</keyword>
<keyword id="KW-0597">Phosphoprotein</keyword>
<keyword id="KW-0675">Receptor</keyword>
<keyword id="KW-1185">Reference proteome</keyword>
<keyword id="KW-0677">Repeat</keyword>
<keyword id="KW-0732">Signal</keyword>
<keyword id="KW-0812">Transmembrane</keyword>
<keyword id="KW-1133">Transmembrane helix</keyword>
<feature type="signal peptide" evidence="3">
    <location>
        <begin position="1"/>
        <end position="19"/>
    </location>
</feature>
<feature type="chain" id="PRO_0000415710" description="Plexin-B2">
    <location>
        <begin position="20"/>
        <end position="1842"/>
    </location>
</feature>
<feature type="topological domain" description="Extracellular" evidence="3">
    <location>
        <begin position="20"/>
        <end position="1201"/>
    </location>
</feature>
<feature type="transmembrane region" description="Helical" evidence="3">
    <location>
        <begin position="1202"/>
        <end position="1222"/>
    </location>
</feature>
<feature type="topological domain" description="Cytoplasmic" evidence="3">
    <location>
        <begin position="1223"/>
        <end position="1842"/>
    </location>
</feature>
<feature type="domain" description="Sema" evidence="4">
    <location>
        <begin position="20"/>
        <end position="468"/>
    </location>
</feature>
<feature type="domain" description="IPT/TIG 1">
    <location>
        <begin position="806"/>
        <end position="895"/>
    </location>
</feature>
<feature type="domain" description="IPT/TIG 2">
    <location>
        <begin position="898"/>
        <end position="982"/>
    </location>
</feature>
<feature type="domain" description="IPT/TIG 3">
    <location>
        <begin position="986"/>
        <end position="1095"/>
    </location>
</feature>
<feature type="site" description="Cleavage; by proprotein convertases" evidence="1">
    <location>
        <begin position="1168"/>
        <end position="1169"/>
    </location>
</feature>
<feature type="modified residue" description="Phosphoserine" evidence="14">
    <location>
        <position position="1240"/>
    </location>
</feature>
<feature type="modified residue" description="Phosphoserine" evidence="14">
    <location>
        <position position="1248"/>
    </location>
</feature>
<feature type="modified residue" description="Phosphoserine" evidence="15">
    <location>
        <position position="1574"/>
    </location>
</feature>
<feature type="glycosylation site" description="N-linked (GlcNAc...) asparagine" evidence="3">
    <location>
        <position position="127"/>
    </location>
</feature>
<feature type="glycosylation site" description="N-linked (GlcNAc...) asparagine" evidence="3">
    <location>
        <position position="242"/>
    </location>
</feature>
<feature type="glycosylation site" description="N-linked (GlcNAc...) asparagine" evidence="6">
    <location>
        <position position="393"/>
    </location>
</feature>
<feature type="glycosylation site" description="N-linked (GlcNAc...) asparagine" evidence="3">
    <location>
        <position position="451"/>
    </location>
</feature>
<feature type="glycosylation site" description="N-linked (GlcNAc...) asparagine" evidence="3">
    <location>
        <position position="798"/>
    </location>
</feature>
<feature type="glycosylation site" description="N-linked (GlcNAc...) asparagine" evidence="3">
    <location>
        <position position="919"/>
    </location>
</feature>
<feature type="glycosylation site" description="N-linked (GlcNAc...) asparagine" evidence="3">
    <location>
        <position position="1053"/>
    </location>
</feature>
<feature type="glycosylation site" description="N-linked (GlcNAc...) asparagine" evidence="3">
    <location>
        <position position="1072"/>
    </location>
</feature>
<feature type="disulfide bond" evidence="4">
    <location>
        <begin position="78"/>
        <end position="87"/>
    </location>
</feature>
<feature type="disulfide bond" evidence="4">
    <location>
        <begin position="112"/>
        <end position="120"/>
    </location>
</feature>
<feature type="disulfide bond" evidence="4">
    <location>
        <begin position="250"/>
        <end position="366"/>
    </location>
</feature>
<feature type="disulfide bond" evidence="4">
    <location>
        <begin position="266"/>
        <end position="313"/>
    </location>
</feature>
<feature type="disulfide bond" evidence="4">
    <location>
        <begin position="331"/>
        <end position="353"/>
    </location>
</feature>
<feature type="disulfide bond" evidence="4">
    <location>
        <begin position="471"/>
        <end position="488"/>
    </location>
</feature>
<feature type="disulfide bond" evidence="4">
    <location>
        <begin position="477"/>
        <end position="520"/>
    </location>
</feature>
<feature type="disulfide bond" evidence="4">
    <location>
        <begin position="480"/>
        <end position="497"/>
    </location>
</feature>
<feature type="disulfide bond" evidence="4">
    <location>
        <begin position="491"/>
        <end position="503"/>
    </location>
</feature>
<feature type="disulfide bond" evidence="4">
    <location>
        <begin position="557"/>
        <end position="576"/>
    </location>
</feature>
<feature type="sequence conflict" description="In Ref. 1; BAE27981." evidence="13" ref="1">
    <original>E</original>
    <variation>G</variation>
    <location>
        <position position="1382"/>
    </location>
</feature>
<feature type="helix" evidence="16">
    <location>
        <begin position="1281"/>
        <end position="1290"/>
    </location>
</feature>
<feature type="strand" evidence="16">
    <location>
        <begin position="1296"/>
        <end position="1300"/>
    </location>
</feature>
<feature type="turn" evidence="16">
    <location>
        <begin position="1301"/>
        <end position="1304"/>
    </location>
</feature>
<feature type="turn" evidence="16">
    <location>
        <begin position="1310"/>
        <end position="1312"/>
    </location>
</feature>
<feature type="helix" evidence="16">
    <location>
        <begin position="1313"/>
        <end position="1327"/>
    </location>
</feature>
<feature type="helix" evidence="16">
    <location>
        <begin position="1330"/>
        <end position="1342"/>
    </location>
</feature>
<feature type="helix" evidence="16">
    <location>
        <begin position="1348"/>
        <end position="1361"/>
    </location>
</feature>
<feature type="helix" evidence="16">
    <location>
        <begin position="1366"/>
        <end position="1385"/>
    </location>
</feature>
<feature type="helix" evidence="16">
    <location>
        <begin position="1400"/>
        <end position="1412"/>
    </location>
</feature>
<feature type="helix" evidence="16">
    <location>
        <begin position="1414"/>
        <end position="1417"/>
    </location>
</feature>
<feature type="turn" evidence="16">
    <location>
        <begin position="1418"/>
        <end position="1421"/>
    </location>
</feature>
<feature type="helix" evidence="16">
    <location>
        <begin position="1422"/>
        <end position="1437"/>
    </location>
</feature>
<feature type="turn" evidence="16">
    <location>
        <begin position="1443"/>
        <end position="1445"/>
    </location>
</feature>
<feature type="strand" evidence="16">
    <location>
        <begin position="1448"/>
        <end position="1450"/>
    </location>
</feature>
<feature type="strand" evidence="17">
    <location>
        <begin position="1466"/>
        <end position="1473"/>
    </location>
</feature>
<feature type="turn" evidence="17">
    <location>
        <begin position="1474"/>
        <end position="1476"/>
    </location>
</feature>
<feature type="strand" evidence="17">
    <location>
        <begin position="1481"/>
        <end position="1486"/>
    </location>
</feature>
<feature type="helix" evidence="17">
    <location>
        <begin position="1491"/>
        <end position="1502"/>
    </location>
</feature>
<feature type="turn" evidence="17">
    <location>
        <begin position="1503"/>
        <end position="1505"/>
    </location>
</feature>
<feature type="helix" evidence="16">
    <location>
        <begin position="1508"/>
        <end position="1510"/>
    </location>
</feature>
<feature type="helix" evidence="17">
    <location>
        <begin position="1514"/>
        <end position="1516"/>
    </location>
</feature>
<feature type="strand" evidence="17">
    <location>
        <begin position="1517"/>
        <end position="1521"/>
    </location>
</feature>
<feature type="strand" evidence="17">
    <location>
        <begin position="1523"/>
        <end position="1526"/>
    </location>
</feature>
<feature type="strand" evidence="17">
    <location>
        <begin position="1532"/>
        <end position="1534"/>
    </location>
</feature>
<feature type="turn" evidence="17">
    <location>
        <begin position="1549"/>
        <end position="1553"/>
    </location>
</feature>
<feature type="strand" evidence="17">
    <location>
        <begin position="1559"/>
        <end position="1564"/>
    </location>
</feature>
<feature type="strand" evidence="16">
    <location>
        <begin position="1592"/>
        <end position="1595"/>
    </location>
</feature>
<feature type="helix" evidence="16">
    <location>
        <begin position="1623"/>
        <end position="1647"/>
    </location>
</feature>
<feature type="helix" evidence="16">
    <location>
        <begin position="1656"/>
        <end position="1671"/>
    </location>
</feature>
<feature type="helix" evidence="16">
    <location>
        <begin position="1677"/>
        <end position="1687"/>
    </location>
</feature>
<feature type="turn" evidence="16">
    <location>
        <begin position="1688"/>
        <end position="1692"/>
    </location>
</feature>
<feature type="helix" evidence="16">
    <location>
        <begin position="1693"/>
        <end position="1698"/>
    </location>
</feature>
<feature type="helix" evidence="16">
    <location>
        <begin position="1700"/>
        <end position="1702"/>
    </location>
</feature>
<feature type="helix" evidence="16">
    <location>
        <begin position="1710"/>
        <end position="1725"/>
    </location>
</feature>
<feature type="helix" evidence="16">
    <location>
        <begin position="1740"/>
        <end position="1744"/>
    </location>
</feature>
<feature type="helix" evidence="16">
    <location>
        <begin position="1747"/>
        <end position="1764"/>
    </location>
</feature>
<feature type="helix" evidence="16">
    <location>
        <begin position="1771"/>
        <end position="1785"/>
    </location>
</feature>
<feature type="helix" evidence="16">
    <location>
        <begin position="1786"/>
        <end position="1788"/>
    </location>
</feature>
<feature type="helix" evidence="16">
    <location>
        <begin position="1791"/>
        <end position="1804"/>
    </location>
</feature>
<feature type="helix" evidence="16">
    <location>
        <begin position="1806"/>
        <end position="1815"/>
    </location>
</feature>
<feature type="helix" evidence="16">
    <location>
        <begin position="1817"/>
        <end position="1821"/>
    </location>
</feature>
<feature type="helix" evidence="16">
    <location>
        <begin position="1824"/>
        <end position="1834"/>
    </location>
</feature>
<feature type="strand" evidence="16">
    <location>
        <begin position="1837"/>
        <end position="1841"/>
    </location>
</feature>
<evidence type="ECO:0000250" key="1"/>
<evidence type="ECO:0000250" key="2">
    <source>
        <dbReference type="UniProtKB" id="O15031"/>
    </source>
</evidence>
<evidence type="ECO:0000255" key="3"/>
<evidence type="ECO:0000255" key="4">
    <source>
        <dbReference type="PROSITE-ProRule" id="PRU00352"/>
    </source>
</evidence>
<evidence type="ECO:0000269" key="5">
    <source>
    </source>
</evidence>
<evidence type="ECO:0000269" key="6">
    <source>
    </source>
</evidence>
<evidence type="ECO:0000269" key="7">
    <source>
    </source>
</evidence>
<evidence type="ECO:0000269" key="8">
    <source>
    </source>
</evidence>
<evidence type="ECO:0000269" key="9">
    <source>
    </source>
</evidence>
<evidence type="ECO:0000269" key="10">
    <source>
    </source>
</evidence>
<evidence type="ECO:0000269" key="11">
    <source>
    </source>
</evidence>
<evidence type="ECO:0000303" key="12">
    <source>
    </source>
</evidence>
<evidence type="ECO:0000305" key="13"/>
<evidence type="ECO:0007744" key="14">
    <source>
    </source>
</evidence>
<evidence type="ECO:0007744" key="15">
    <source>
    </source>
</evidence>
<evidence type="ECO:0007829" key="16">
    <source>
        <dbReference type="PDB" id="5E6P"/>
    </source>
</evidence>
<evidence type="ECO:0007829" key="17">
    <source>
        <dbReference type="PDB" id="7KDC"/>
    </source>
</evidence>
<comment type="function">
    <text evidence="2 5 7 8 9 10 11">Cell surface receptor for SEMA4C, SEMA4D and SEMA4G that plays an important role in cell-cell signaling (PubMed:17554007, PubMed:21122816). Plays a role in glutamatergic synapse development and is required for SEMA4A-mediated excitatory synapse development (PubMed:29981480). Binding to class 4 semaphorins promotes downstream activation of RHOA and phosphorylation of ERBB2 at 'Tyr-1248' (PubMed:17554007). Also acts as a cell surface receptor for angiogenin (ANG); promoting ANG endocytosis and translocation to the cytoplasm or nucleus (PubMed:29100074). Required for normal differentiation and migration of neuronal cells during brain corticogenesis and for normal embryonic brain development (PubMed:19948886). Regulates the migration of cerebellar granule cells in the developing brain (PubMed:21122816). Plays a role in RHOA activation and subsequent changes of the actin cytoskeleton (By similarity). Plays a role in axon guidance, invasive growth and cell migration (By similarity). May modulate the activity of RAC1 and CDC42 (PubMed:21966369). Down-regulates macrophage migration in wound-healing assays (in vitro) (PubMed:21966369).</text>
</comment>
<comment type="subunit">
    <text evidence="2">Monomer, and heterodimer with PLXNB1 (By similarity). Interacts with MET, ARHGEF11 and ARHGEF12 (By similarity). May also interact with MST1R (By similarity).</text>
</comment>
<comment type="interaction">
    <interactant intactId="EBI-8496724">
        <id>B2RXS4</id>
    </interactant>
    <interactant intactId="EBI-2365869">
        <id>Q68FM7</id>
        <label>Arhgef11</label>
    </interactant>
    <organismsDiffer>false</organismsDiffer>
    <experiments>2</experiments>
</comment>
<comment type="subcellular location">
    <subcellularLocation>
        <location evidence="9">Cell membrane</location>
        <topology evidence="3">Single-pass type I membrane protein</topology>
    </subcellularLocation>
</comment>
<comment type="tissue specificity">
    <text evidence="5 9 11">Detected in macrophages from spleen and bone marrow (at protein level) (PubMed:21966369). Detected in granule cells in the developing cerebellum, dentate gyrus and olfactory bulb (PubMed:17554007). Expressed in neurons and glia in the developing hippocampus (PubMed:29981480).</text>
</comment>
<comment type="disruption phenotype">
    <text evidence="5 7">Embryonic and perinatal lethality, due to defects in brain and neural tube development (PubMed:17554007, PubMed:19948886). Mice exhibit abnormal cortical layering and defective migration and differentiation of several subtypes of cortical neurons (PubMed:17554007, PubMed:19948886). Cranial neural folds fail to converge in most embryos, leading to an open neural tube and exencephaly. Likewise, mice exhibit defects in the embryonic development of the cerebellum and the olfactory bulb (PubMed:17554007, PubMed:19948886).</text>
</comment>
<comment type="similarity">
    <text evidence="13">Belongs to the plexin family.</text>
</comment>
<dbReference type="EMBL" id="AK147538">
    <property type="protein sequence ID" value="BAE27981.1"/>
    <property type="molecule type" value="mRNA"/>
</dbReference>
<dbReference type="EMBL" id="AC113069">
    <property type="status" value="NOT_ANNOTATED_CDS"/>
    <property type="molecule type" value="Genomic_DNA"/>
</dbReference>
<dbReference type="EMBL" id="AC160538">
    <property type="status" value="NOT_ANNOTATED_CDS"/>
    <property type="molecule type" value="Genomic_DNA"/>
</dbReference>
<dbReference type="EMBL" id="CH466550">
    <property type="protein sequence ID" value="EDL04367.1"/>
    <property type="molecule type" value="Genomic_DNA"/>
</dbReference>
<dbReference type="EMBL" id="BC157960">
    <property type="protein sequence ID" value="AAI57961.1"/>
    <property type="molecule type" value="mRNA"/>
</dbReference>
<dbReference type="EMBL" id="BC157961">
    <property type="protein sequence ID" value="AAI57962.1"/>
    <property type="molecule type" value="mRNA"/>
</dbReference>
<dbReference type="EMBL" id="BC158086">
    <property type="protein sequence ID" value="AAI58087.1"/>
    <property type="molecule type" value="mRNA"/>
</dbReference>
<dbReference type="EMBL" id="BC172162">
    <property type="protein sequence ID" value="AAI72162.1"/>
    <property type="molecule type" value="mRNA"/>
</dbReference>
<dbReference type="CCDS" id="CCDS49698.1"/>
<dbReference type="RefSeq" id="NP_001152993.1">
    <property type="nucleotide sequence ID" value="NM_001159521.3"/>
</dbReference>
<dbReference type="RefSeq" id="NP_001271435.1">
    <property type="nucleotide sequence ID" value="NM_001284506.2"/>
</dbReference>
<dbReference type="RefSeq" id="NP_001403354.1">
    <property type="nucleotide sequence ID" value="NM_001416425.1"/>
</dbReference>
<dbReference type="RefSeq" id="NP_001403355.1">
    <property type="nucleotide sequence ID" value="NM_001416426.1"/>
</dbReference>
<dbReference type="RefSeq" id="NP_001403356.1">
    <property type="nucleotide sequence ID" value="NM_001416427.1"/>
</dbReference>
<dbReference type="RefSeq" id="NP_001403357.1">
    <property type="nucleotide sequence ID" value="NM_001416428.1"/>
</dbReference>
<dbReference type="RefSeq" id="NP_001403358.1">
    <property type="nucleotide sequence ID" value="NM_001416429.1"/>
</dbReference>
<dbReference type="RefSeq" id="NP_001403359.1">
    <property type="nucleotide sequence ID" value="NM_001416430.1"/>
</dbReference>
<dbReference type="RefSeq" id="NP_001403360.1">
    <property type="nucleotide sequence ID" value="NM_001416431.1"/>
</dbReference>
<dbReference type="RefSeq" id="NP_001403361.1">
    <property type="nucleotide sequence ID" value="NM_001416432.1"/>
</dbReference>
<dbReference type="RefSeq" id="NP_001403362.1">
    <property type="nucleotide sequence ID" value="NM_001416433.1"/>
</dbReference>
<dbReference type="RefSeq" id="NP_001403363.1">
    <property type="nucleotide sequence ID" value="NM_001416434.1"/>
</dbReference>
<dbReference type="RefSeq" id="NP_620088.2">
    <property type="nucleotide sequence ID" value="NM_138749.3"/>
</dbReference>
<dbReference type="RefSeq" id="XP_006520475.1">
    <property type="nucleotide sequence ID" value="XM_006520412.1"/>
</dbReference>
<dbReference type="RefSeq" id="XP_006520476.1">
    <property type="nucleotide sequence ID" value="XM_006520413.1"/>
</dbReference>
<dbReference type="RefSeq" id="XP_011243751.1">
    <property type="nucleotide sequence ID" value="XM_011245449.1"/>
</dbReference>
<dbReference type="RefSeq" id="XP_011243752.1">
    <property type="nucleotide sequence ID" value="XM_011245450.2"/>
</dbReference>
<dbReference type="RefSeq" id="XP_011243753.1">
    <property type="nucleotide sequence ID" value="XM_011245451.2"/>
</dbReference>
<dbReference type="RefSeq" id="XP_030104178.1">
    <property type="nucleotide sequence ID" value="XM_030248318.2"/>
</dbReference>
<dbReference type="PDB" id="5E6P">
    <property type="method" value="X-ray"/>
    <property type="resolution" value="3.21 A"/>
    <property type="chains" value="A=1226-1842"/>
</dbReference>
<dbReference type="PDB" id="7KDC">
    <property type="method" value="X-ray"/>
    <property type="resolution" value="3.10 A"/>
    <property type="chains" value="C/D=1463-1565"/>
</dbReference>
<dbReference type="PDBsum" id="5E6P"/>
<dbReference type="PDBsum" id="7KDC"/>
<dbReference type="SMR" id="B2RXS4"/>
<dbReference type="BioGRID" id="228283">
    <property type="interactions" value="15"/>
</dbReference>
<dbReference type="FunCoup" id="B2RXS4">
    <property type="interactions" value="227"/>
</dbReference>
<dbReference type="IntAct" id="B2RXS4">
    <property type="interactions" value="2"/>
</dbReference>
<dbReference type="MINT" id="B2RXS4"/>
<dbReference type="STRING" id="10090.ENSMUSP00000104955"/>
<dbReference type="GlyConnect" id="2594">
    <property type="glycosylation" value="15 N-Linked glycans (7 sites)"/>
</dbReference>
<dbReference type="GlyCosmos" id="B2RXS4">
    <property type="glycosylation" value="12 sites, 15 glycans"/>
</dbReference>
<dbReference type="GlyGen" id="B2RXS4">
    <property type="glycosylation" value="14 sites, 25 N-linked glycans (12 sites), 1 O-linked glycan (1 site)"/>
</dbReference>
<dbReference type="iPTMnet" id="B2RXS4"/>
<dbReference type="PhosphoSitePlus" id="B2RXS4"/>
<dbReference type="SwissPalm" id="B2RXS4"/>
<dbReference type="jPOST" id="B2RXS4"/>
<dbReference type="PaxDb" id="10090-ENSMUSP00000051731"/>
<dbReference type="PeptideAtlas" id="B2RXS4"/>
<dbReference type="ProteomicsDB" id="289942"/>
<dbReference type="Pumba" id="B2RXS4"/>
<dbReference type="Antibodypedia" id="322">
    <property type="antibodies" value="146 antibodies from 22 providers"/>
</dbReference>
<dbReference type="CPTC" id="B2RXS4">
    <property type="antibodies" value="3 antibodies"/>
</dbReference>
<dbReference type="DNASU" id="140570"/>
<dbReference type="Ensembl" id="ENSMUST00000060808.10">
    <property type="protein sequence ID" value="ENSMUSP00000051731.10"/>
    <property type="gene ID" value="ENSMUSG00000036606.18"/>
</dbReference>
<dbReference type="Ensembl" id="ENSMUST00000109331.9">
    <property type="protein sequence ID" value="ENSMUSP00000104955.2"/>
    <property type="gene ID" value="ENSMUSG00000036606.18"/>
</dbReference>
<dbReference type="GeneID" id="140570"/>
<dbReference type="KEGG" id="mmu:140570"/>
<dbReference type="UCSC" id="uc007xfr.2">
    <property type="organism name" value="mouse"/>
</dbReference>
<dbReference type="AGR" id="MGI:2154239"/>
<dbReference type="CTD" id="23654"/>
<dbReference type="MGI" id="MGI:2154239">
    <property type="gene designation" value="Plxnb2"/>
</dbReference>
<dbReference type="VEuPathDB" id="HostDB:ENSMUSG00000036606"/>
<dbReference type="eggNOG" id="KOG3610">
    <property type="taxonomic scope" value="Eukaryota"/>
</dbReference>
<dbReference type="GeneTree" id="ENSGT01020000230394"/>
<dbReference type="HOGENOM" id="CLU_001436_1_1_1"/>
<dbReference type="InParanoid" id="B2RXS4"/>
<dbReference type="OMA" id="EYVFHND"/>
<dbReference type="OrthoDB" id="125363at2759"/>
<dbReference type="PhylomeDB" id="B2RXS4"/>
<dbReference type="TreeFam" id="TF312962"/>
<dbReference type="BioGRID-ORCS" id="140570">
    <property type="hits" value="0 hits in 78 CRISPR screens"/>
</dbReference>
<dbReference type="ChiTaRS" id="Plxnb2">
    <property type="organism name" value="mouse"/>
</dbReference>
<dbReference type="EvolutionaryTrace" id="B2RXS4"/>
<dbReference type="PRO" id="PR:B2RXS4"/>
<dbReference type="Proteomes" id="UP000000589">
    <property type="component" value="Chromosome 15"/>
</dbReference>
<dbReference type="RNAct" id="B2RXS4">
    <property type="molecule type" value="protein"/>
</dbReference>
<dbReference type="Bgee" id="ENSMUSG00000036606">
    <property type="expression patterns" value="Expressed in pyloric antrum and 297 other cell types or tissues"/>
</dbReference>
<dbReference type="GO" id="GO:0062023">
    <property type="term" value="C:collagen-containing extracellular matrix"/>
    <property type="evidence" value="ECO:0007005"/>
    <property type="project" value="BHF-UCL"/>
</dbReference>
<dbReference type="GO" id="GO:0005886">
    <property type="term" value="C:plasma membrane"/>
    <property type="evidence" value="ECO:0000314"/>
    <property type="project" value="UniProtKB"/>
</dbReference>
<dbReference type="GO" id="GO:0017154">
    <property type="term" value="F:semaphorin receptor activity"/>
    <property type="evidence" value="ECO:0000315"/>
    <property type="project" value="UniProtKB"/>
</dbReference>
<dbReference type="GO" id="GO:0004888">
    <property type="term" value="F:transmembrane signaling receptor activity"/>
    <property type="evidence" value="ECO:0000314"/>
    <property type="project" value="UniProtKB"/>
</dbReference>
<dbReference type="GO" id="GO:0007420">
    <property type="term" value="P:brain development"/>
    <property type="evidence" value="ECO:0000315"/>
    <property type="project" value="UniProtKB"/>
</dbReference>
<dbReference type="GO" id="GO:1904861">
    <property type="term" value="P:excitatory synapse assembly"/>
    <property type="evidence" value="ECO:0000315"/>
    <property type="project" value="UniProtKB"/>
</dbReference>
<dbReference type="GO" id="GO:0007156">
    <property type="term" value="P:homophilic cell adhesion via plasma membrane adhesion molecules"/>
    <property type="evidence" value="ECO:0007669"/>
    <property type="project" value="Ensembl"/>
</dbReference>
<dbReference type="GO" id="GO:0001843">
    <property type="term" value="P:neural tube closure"/>
    <property type="evidence" value="ECO:0000315"/>
    <property type="project" value="UniProtKB"/>
</dbReference>
<dbReference type="GO" id="GO:0007405">
    <property type="term" value="P:neuroblast proliferation"/>
    <property type="evidence" value="ECO:0000315"/>
    <property type="project" value="UniProtKB"/>
</dbReference>
<dbReference type="GO" id="GO:0050772">
    <property type="term" value="P:positive regulation of axonogenesis"/>
    <property type="evidence" value="ECO:0000316"/>
    <property type="project" value="MGI"/>
</dbReference>
<dbReference type="GO" id="GO:0010976">
    <property type="term" value="P:positive regulation of neuron projection development"/>
    <property type="evidence" value="ECO:0007669"/>
    <property type="project" value="Ensembl"/>
</dbReference>
<dbReference type="GO" id="GO:0045727">
    <property type="term" value="P:positive regulation of translation"/>
    <property type="evidence" value="ECO:0007669"/>
    <property type="project" value="Ensembl"/>
</dbReference>
<dbReference type="GO" id="GO:0006898">
    <property type="term" value="P:receptor-mediated endocytosis"/>
    <property type="evidence" value="ECO:0007669"/>
    <property type="project" value="Ensembl"/>
</dbReference>
<dbReference type="GO" id="GO:0008360">
    <property type="term" value="P:regulation of cell shape"/>
    <property type="evidence" value="ECO:0000315"/>
    <property type="project" value="UniProtKB"/>
</dbReference>
<dbReference type="GO" id="GO:0043087">
    <property type="term" value="P:regulation of GTPase activity"/>
    <property type="evidence" value="ECO:0000315"/>
    <property type="project" value="UniProtKB"/>
</dbReference>
<dbReference type="GO" id="GO:2001222">
    <property type="term" value="P:regulation of neuron migration"/>
    <property type="evidence" value="ECO:0000315"/>
    <property type="project" value="UniProtKB"/>
</dbReference>
<dbReference type="GO" id="GO:0001932">
    <property type="term" value="P:regulation of protein phosphorylation"/>
    <property type="evidence" value="ECO:0000315"/>
    <property type="project" value="UniProtKB"/>
</dbReference>
<dbReference type="GO" id="GO:0071526">
    <property type="term" value="P:semaphorin-plexin signaling pathway"/>
    <property type="evidence" value="ECO:0000315"/>
    <property type="project" value="UniProtKB"/>
</dbReference>
<dbReference type="CDD" id="cd01180">
    <property type="entry name" value="IPT_plexin_repeat1"/>
    <property type="match status" value="1"/>
</dbReference>
<dbReference type="CDD" id="cd01179">
    <property type="entry name" value="IPT_plexin_repeat2"/>
    <property type="match status" value="1"/>
</dbReference>
<dbReference type="CDD" id="cd12792">
    <property type="entry name" value="RasGAP_plexin_B2"/>
    <property type="match status" value="1"/>
</dbReference>
<dbReference type="FunFam" id="2.60.40.10:FF:000131">
    <property type="entry name" value="Plexin A2"/>
    <property type="match status" value="1"/>
</dbReference>
<dbReference type="FunFam" id="2.130.10.10:FF:000281">
    <property type="entry name" value="Plexin B2"/>
    <property type="match status" value="1"/>
</dbReference>
<dbReference type="FunFam" id="2.60.40.10:FF:000203">
    <property type="entry name" value="Plexin B2"/>
    <property type="match status" value="1"/>
</dbReference>
<dbReference type="FunFam" id="2.60.40.10:FF:000798">
    <property type="entry name" value="Plexin B2"/>
    <property type="match status" value="1"/>
</dbReference>
<dbReference type="FunFam" id="3.10.20.90:FF:000102">
    <property type="entry name" value="Plexin B2"/>
    <property type="match status" value="1"/>
</dbReference>
<dbReference type="FunFam" id="1.10.506.10:FF:000035">
    <property type="entry name" value="Plexin b2a"/>
    <property type="match status" value="1"/>
</dbReference>
<dbReference type="Gene3D" id="1.10.506.10">
    <property type="entry name" value="GTPase Activation - p120gap, domain 1"/>
    <property type="match status" value="1"/>
</dbReference>
<dbReference type="Gene3D" id="2.60.40.10">
    <property type="entry name" value="Immunoglobulins"/>
    <property type="match status" value="3"/>
</dbReference>
<dbReference type="Gene3D" id="3.10.20.90">
    <property type="entry name" value="Phosphatidylinositol 3-kinase Catalytic Subunit, Chain A, domain 1"/>
    <property type="match status" value="1"/>
</dbReference>
<dbReference type="Gene3D" id="2.130.10.10">
    <property type="entry name" value="YVTN repeat-like/Quinoprotein amine dehydrogenase"/>
    <property type="match status" value="1"/>
</dbReference>
<dbReference type="InterPro" id="IPR013783">
    <property type="entry name" value="Ig-like_fold"/>
</dbReference>
<dbReference type="InterPro" id="IPR014756">
    <property type="entry name" value="Ig_E-set"/>
</dbReference>
<dbReference type="InterPro" id="IPR002909">
    <property type="entry name" value="IPT_dom"/>
</dbReference>
<dbReference type="InterPro" id="IPR031148">
    <property type="entry name" value="Plexin"/>
</dbReference>
<dbReference type="InterPro" id="IPR013548">
    <property type="entry name" value="Plexin_cytoplasmic_RasGAP_dom"/>
</dbReference>
<dbReference type="InterPro" id="IPR046800">
    <property type="entry name" value="Plexin_RBD"/>
</dbReference>
<dbReference type="InterPro" id="IPR002165">
    <property type="entry name" value="Plexin_repeat"/>
</dbReference>
<dbReference type="InterPro" id="IPR016201">
    <property type="entry name" value="PSI"/>
</dbReference>
<dbReference type="InterPro" id="IPR008936">
    <property type="entry name" value="Rho_GTPase_activation_prot"/>
</dbReference>
<dbReference type="InterPro" id="IPR001627">
    <property type="entry name" value="Semap_dom"/>
</dbReference>
<dbReference type="InterPro" id="IPR036352">
    <property type="entry name" value="Semap_dom_sf"/>
</dbReference>
<dbReference type="InterPro" id="IPR041019">
    <property type="entry name" value="TIG1_plexin"/>
</dbReference>
<dbReference type="InterPro" id="IPR015943">
    <property type="entry name" value="WD40/YVTN_repeat-like_dom_sf"/>
</dbReference>
<dbReference type="PANTHER" id="PTHR22625">
    <property type="entry name" value="PLEXIN"/>
    <property type="match status" value="1"/>
</dbReference>
<dbReference type="PANTHER" id="PTHR22625:SF9">
    <property type="entry name" value="PLEXIN-B2"/>
    <property type="match status" value="1"/>
</dbReference>
<dbReference type="Pfam" id="PF08337">
    <property type="entry name" value="Plexin_cytopl"/>
    <property type="match status" value="1"/>
</dbReference>
<dbReference type="Pfam" id="PF20170">
    <property type="entry name" value="Plexin_RBD"/>
    <property type="match status" value="1"/>
</dbReference>
<dbReference type="Pfam" id="PF01437">
    <property type="entry name" value="PSI"/>
    <property type="match status" value="1"/>
</dbReference>
<dbReference type="Pfam" id="PF24317">
    <property type="entry name" value="PSI_Plexin-B"/>
    <property type="match status" value="1"/>
</dbReference>
<dbReference type="Pfam" id="PF01403">
    <property type="entry name" value="Sema"/>
    <property type="match status" value="1"/>
</dbReference>
<dbReference type="Pfam" id="PF01833">
    <property type="entry name" value="TIG"/>
    <property type="match status" value="2"/>
</dbReference>
<dbReference type="Pfam" id="PF17960">
    <property type="entry name" value="TIG_plexin"/>
    <property type="match status" value="1"/>
</dbReference>
<dbReference type="SMART" id="SM00429">
    <property type="entry name" value="IPT"/>
    <property type="match status" value="3"/>
</dbReference>
<dbReference type="SMART" id="SM00423">
    <property type="entry name" value="PSI"/>
    <property type="match status" value="3"/>
</dbReference>
<dbReference type="SMART" id="SM00630">
    <property type="entry name" value="Sema"/>
    <property type="match status" value="1"/>
</dbReference>
<dbReference type="SUPFAM" id="SSF81296">
    <property type="entry name" value="E set domains"/>
    <property type="match status" value="3"/>
</dbReference>
<dbReference type="SUPFAM" id="SSF48350">
    <property type="entry name" value="GTPase activation domain, GAP"/>
    <property type="match status" value="1"/>
</dbReference>
<dbReference type="SUPFAM" id="SSF103575">
    <property type="entry name" value="Plexin repeat"/>
    <property type="match status" value="1"/>
</dbReference>
<dbReference type="SUPFAM" id="SSF101912">
    <property type="entry name" value="Sema domain"/>
    <property type="match status" value="1"/>
</dbReference>
<dbReference type="PROSITE" id="PS51004">
    <property type="entry name" value="SEMA"/>
    <property type="match status" value="1"/>
</dbReference>
<protein>
    <recommendedName>
        <fullName evidence="12">Plexin-B2</fullName>
    </recommendedName>
</protein>
<accession>B2RXS4</accession>
<accession>Q3UH76</accession>
<gene>
    <name evidence="12" type="primary">Plxnb2</name>
</gene>
<proteinExistence type="evidence at protein level"/>
<sequence>MALPLWALTFLGLTGLGLSLRSRKPESFRSETELNHLAVDEVTGVVYVGAVNALYQLSADLHVQQHVVTGPFMDNKKCTPPIEASQCHEAVLTDNFNQLLLLDPPGKRLVECGSLFKGICALRAMSNISVRLFYEDGSGEKSFVASNDERVATVGLVTSTRPDGERVLFVGKGNGPHDNGIIVSTRLLDRAEGREAFEAYSDHTTFKAGYLSTNTQQFVAAFEDDFYVFFVFNHQDKHPAKNRTLLARMCKDDPSYYSYVEMDLQCQDPSDPQDSAFGTCLAASVATSGAGRALYAVFSRDGRSTGGPGAGLCVFPLDKVREKIEANRNACYTGAREAGRTIFYKPFHGEIQCGGHLIGASESFPCGSEHLPYPLGSRDGLVATAVLHRGGLNLTAVTVTAENDHTVAFLGTSDGRILKVYLAPDGTSAEYGSIPVDINKKIKQDLALSGNLSSLYAMTQDKVFRLPVQECLSYVTCAQCRDSQDPYCGWCVIEGRCTRKSECSRAEETGHWLWSREKSCVAITDAFPQNMSRRAQGEVRLSVSPLPTLTEDDELLCLFGDSPPHPARVEDDTVICNSPSSIPSTPPGQDHVDVSIQLLLKSGSVFLTSHQYPFYDCREAMSLVENLPCISCASNRWTCQWDLQYYECREASPNPEEGIIRAHMEDNCPQFLAPDPLVIPMNHETEVTFQGKNLETVKVSSLYVGSELLNFEETVTMHESDTFSFRTPKLSHDGNETLPLHLYVKSFGKNIDSKLQVTLYNCSFGRSDCSLCLAADPAYRCVWCRGQNRCVYEALCSNVTSECPPPVITRIQPETGPLGGGILVTIHGSNLGVKADDVKKITVAGQNCAFEPRGYSVSTRIVCAIEASEMPFTGGIEVDVNGKLGHSPPHVQFTYQQPQPLSVEPRQGPQAGGTTLTINGTHLDTGSKEDVRVTLNDVPCEVTKFGAQLQCVTGQQLAPGQVTLEIYYGGSRVPSPGISFTYCENPMIRAFEPLRSFVSGGRSINVTGQGFSLIQKFAMVVIAEPLRSWRRRRREAGALERVTVEGMEYVFYNDTKVVFLSPAVPEEPEAYNLTVLIRMDGHCAPLRTEAGVFEYVADPTFENFTGGVKKQVNKLIHARGTNLNKAMTLEEAEAFVGAERCIMKTLTETDLYCEPPEVQPPPKRRQKRDTAHNLPEFIVKFGSREWVLGRVEYDTRASDVPLSLILPLVMVPMVFIIVVSIYCYWRKSQQAEREYEKIKSQLEGLEESVRDRCKKEFTDLMIEMEDQTNDVHEAGIPTLDYKTYTDRVFFLPSKDGDKDVMITGKLDIPESRRPIVEQALYQFSNLLNSKSFLINFIHTLENQREFSARAKVYFASLLTVALHGKLEYYTDIMRTLFLELMEQYVVAKNPKLMLRRSETVVERMLSNWMSICLYQYLKDSAGEPLYKLFKAIKHQVEKGPVDAVQKKAKYTLNDTGLLGDDVEYAPLTVSVIVQDEGIDAIPVKVLNCDTISQVKEKIIDQVYRTQPCSCWPKPDSVVLEWRPGSTAQILSDLDLTSQREGRWKRINTLMHYNVRDGATLILSKVGVSQQPEDSQQDLPGERHALLEEENRVWHLVRPTDEVDEGKSKRGSMKEKERTKAITEIYLTRLLSVKGTLQQFVDNFFQSVLAPGHAVPPAVKYFFDFLDEQAEKHDIRDEDTIHIWKTNSLPLRFWVNILKNPHFIFDVHVHEVVDASLSVIAQTFMDACTRTEHKLSRDSPSNKLLYAKEISTYKKMVEDYYKGIRQMVQVSDQDMNTHLAEISRAHTDSLNTLVALHQLYQYTQKYYDEIINALEEDPAAQKMQLAFRLQQIAAALENKVTDL</sequence>
<name>PLXB2_MOUSE</name>